<proteinExistence type="inferred from homology"/>
<accession>A4GYW6</accession>
<keyword id="KW-0150">Chloroplast</keyword>
<keyword id="KW-0472">Membrane</keyword>
<keyword id="KW-0520">NAD</keyword>
<keyword id="KW-0521">NADP</keyword>
<keyword id="KW-0934">Plastid</keyword>
<keyword id="KW-0618">Plastoquinone</keyword>
<keyword id="KW-0874">Quinone</keyword>
<keyword id="KW-1185">Reference proteome</keyword>
<keyword id="KW-0691">RNA editing</keyword>
<keyword id="KW-0793">Thylakoid</keyword>
<keyword id="KW-1278">Translocase</keyword>
<keyword id="KW-0812">Transmembrane</keyword>
<keyword id="KW-1133">Transmembrane helix</keyword>
<reference key="1">
    <citation type="journal article" date="2006" name="Science">
        <title>The genome of black cottonwood, Populus trichocarpa (Torr. &amp; Gray).</title>
        <authorList>
            <person name="Tuskan G.A."/>
            <person name="Difazio S."/>
            <person name="Jansson S."/>
            <person name="Bohlmann J."/>
            <person name="Grigoriev I."/>
            <person name="Hellsten U."/>
            <person name="Putnam N."/>
            <person name="Ralph S."/>
            <person name="Rombauts S."/>
            <person name="Salamov A."/>
            <person name="Schein J."/>
            <person name="Sterck L."/>
            <person name="Aerts A."/>
            <person name="Bhalerao R.R."/>
            <person name="Bhalerao R.P."/>
            <person name="Blaudez D."/>
            <person name="Boerjan W."/>
            <person name="Brun A."/>
            <person name="Brunner A."/>
            <person name="Busov V."/>
            <person name="Campbell M."/>
            <person name="Carlson J."/>
            <person name="Chalot M."/>
            <person name="Chapman J."/>
            <person name="Chen G.-L."/>
            <person name="Cooper D."/>
            <person name="Coutinho P.M."/>
            <person name="Couturier J."/>
            <person name="Covert S."/>
            <person name="Cronk Q."/>
            <person name="Cunningham R."/>
            <person name="Davis J."/>
            <person name="Degroeve S."/>
            <person name="Dejardin A."/>
            <person name="dePamphilis C.W."/>
            <person name="Detter J."/>
            <person name="Dirks B."/>
            <person name="Dubchak I."/>
            <person name="Duplessis S."/>
            <person name="Ehlting J."/>
            <person name="Ellis B."/>
            <person name="Gendler K."/>
            <person name="Goodstein D."/>
            <person name="Gribskov M."/>
            <person name="Grimwood J."/>
            <person name="Groover A."/>
            <person name="Gunter L."/>
            <person name="Hamberger B."/>
            <person name="Heinze B."/>
            <person name="Helariutta Y."/>
            <person name="Henrissat B."/>
            <person name="Holligan D."/>
            <person name="Holt R."/>
            <person name="Huang W."/>
            <person name="Islam-Faridi N."/>
            <person name="Jones S."/>
            <person name="Jones-Rhoades M."/>
            <person name="Jorgensen R."/>
            <person name="Joshi C."/>
            <person name="Kangasjaervi J."/>
            <person name="Karlsson J."/>
            <person name="Kelleher C."/>
            <person name="Kirkpatrick R."/>
            <person name="Kirst M."/>
            <person name="Kohler A."/>
            <person name="Kalluri U."/>
            <person name="Larimer F."/>
            <person name="Leebens-Mack J."/>
            <person name="Leple J.-C."/>
            <person name="Locascio P."/>
            <person name="Lou Y."/>
            <person name="Lucas S."/>
            <person name="Martin F."/>
            <person name="Montanini B."/>
            <person name="Napoli C."/>
            <person name="Nelson D.R."/>
            <person name="Nelson C."/>
            <person name="Nieminen K."/>
            <person name="Nilsson O."/>
            <person name="Pereda V."/>
            <person name="Peter G."/>
            <person name="Philippe R."/>
            <person name="Pilate G."/>
            <person name="Poliakov A."/>
            <person name="Razumovskaya J."/>
            <person name="Richardson P."/>
            <person name="Rinaldi C."/>
            <person name="Ritland K."/>
            <person name="Rouze P."/>
            <person name="Ryaboy D."/>
            <person name="Schmutz J."/>
            <person name="Schrader J."/>
            <person name="Segerman B."/>
            <person name="Shin H."/>
            <person name="Siddiqui A."/>
            <person name="Sterky F."/>
            <person name="Terry A."/>
            <person name="Tsai C.-J."/>
            <person name="Uberbacher E."/>
            <person name="Unneberg P."/>
            <person name="Vahala J."/>
            <person name="Wall K."/>
            <person name="Wessler S."/>
            <person name="Yang G."/>
            <person name="Yin T."/>
            <person name="Douglas C."/>
            <person name="Marra M."/>
            <person name="Sandberg G."/>
            <person name="Van de Peer Y."/>
            <person name="Rokhsar D.S."/>
        </authorList>
    </citation>
    <scope>NUCLEOTIDE SEQUENCE [LARGE SCALE GENOMIC DNA]</scope>
    <source>
        <strain>cv. Nisqually</strain>
    </source>
</reference>
<organism>
    <name type="scientific">Populus trichocarpa</name>
    <name type="common">Western balsam poplar</name>
    <name type="synonym">Populus balsamifera subsp. trichocarpa</name>
    <dbReference type="NCBI Taxonomy" id="3694"/>
    <lineage>
        <taxon>Eukaryota</taxon>
        <taxon>Viridiplantae</taxon>
        <taxon>Streptophyta</taxon>
        <taxon>Embryophyta</taxon>
        <taxon>Tracheophyta</taxon>
        <taxon>Spermatophyta</taxon>
        <taxon>Magnoliopsida</taxon>
        <taxon>eudicotyledons</taxon>
        <taxon>Gunneridae</taxon>
        <taxon>Pentapetalae</taxon>
        <taxon>rosids</taxon>
        <taxon>fabids</taxon>
        <taxon>Malpighiales</taxon>
        <taxon>Salicaceae</taxon>
        <taxon>Saliceae</taxon>
        <taxon>Populus</taxon>
    </lineage>
</organism>
<protein>
    <recommendedName>
        <fullName evidence="2">NAD(P)H-quinone oxidoreductase chain 4, chloroplastic</fullName>
        <ecNumber evidence="2">7.1.1.-</ecNumber>
    </recommendedName>
    <alternativeName>
        <fullName evidence="2">NAD(P)H dehydrogenase, chain 4</fullName>
    </alternativeName>
    <alternativeName>
        <fullName evidence="2">NADH-plastoquinone oxidoreductase chain 4</fullName>
    </alternativeName>
</protein>
<feature type="chain" id="PRO_0000343303" description="NAD(P)H-quinone oxidoreductase chain 4, chloroplastic">
    <location>
        <begin position="1"/>
        <end position="500"/>
    </location>
</feature>
<feature type="transmembrane region" description="Helical" evidence="2">
    <location>
        <begin position="4"/>
        <end position="24"/>
    </location>
</feature>
<feature type="transmembrane region" description="Helical" evidence="2">
    <location>
        <begin position="35"/>
        <end position="55"/>
    </location>
</feature>
<feature type="transmembrane region" description="Helical" evidence="2">
    <location>
        <begin position="84"/>
        <end position="104"/>
    </location>
</feature>
<feature type="transmembrane region" description="Helical" evidence="2">
    <location>
        <begin position="113"/>
        <end position="133"/>
    </location>
</feature>
<feature type="transmembrane region" description="Helical" evidence="2">
    <location>
        <begin position="134"/>
        <end position="154"/>
    </location>
</feature>
<feature type="transmembrane region" description="Helical" evidence="2">
    <location>
        <begin position="167"/>
        <end position="187"/>
    </location>
</feature>
<feature type="transmembrane region" description="Helical" evidence="2">
    <location>
        <begin position="211"/>
        <end position="231"/>
    </location>
</feature>
<feature type="transmembrane region" description="Helical" evidence="2">
    <location>
        <begin position="242"/>
        <end position="262"/>
    </location>
</feature>
<feature type="transmembrane region" description="Helical" evidence="2">
    <location>
        <begin position="272"/>
        <end position="292"/>
    </location>
</feature>
<feature type="transmembrane region" description="Helical" evidence="2">
    <location>
        <begin position="305"/>
        <end position="325"/>
    </location>
</feature>
<feature type="transmembrane region" description="Helical" evidence="2">
    <location>
        <begin position="330"/>
        <end position="350"/>
    </location>
</feature>
<feature type="transmembrane region" description="Helical" evidence="2">
    <location>
        <begin position="386"/>
        <end position="406"/>
    </location>
</feature>
<feature type="transmembrane region" description="Helical" evidence="2">
    <location>
        <begin position="416"/>
        <end position="436"/>
    </location>
</feature>
<feature type="transmembrane region" description="Helical" evidence="2">
    <location>
        <begin position="463"/>
        <end position="483"/>
    </location>
</feature>
<name>NU4C_POPTR</name>
<evidence type="ECO:0000250" key="1"/>
<evidence type="ECO:0000255" key="2">
    <source>
        <dbReference type="HAMAP-Rule" id="MF_00491"/>
    </source>
</evidence>
<comment type="catalytic activity">
    <reaction evidence="2">
        <text>a plastoquinone + NADH + (n+1) H(+)(in) = a plastoquinol + NAD(+) + n H(+)(out)</text>
        <dbReference type="Rhea" id="RHEA:42608"/>
        <dbReference type="Rhea" id="RHEA-COMP:9561"/>
        <dbReference type="Rhea" id="RHEA-COMP:9562"/>
        <dbReference type="ChEBI" id="CHEBI:15378"/>
        <dbReference type="ChEBI" id="CHEBI:17757"/>
        <dbReference type="ChEBI" id="CHEBI:57540"/>
        <dbReference type="ChEBI" id="CHEBI:57945"/>
        <dbReference type="ChEBI" id="CHEBI:62192"/>
    </reaction>
</comment>
<comment type="catalytic activity">
    <reaction evidence="2">
        <text>a plastoquinone + NADPH + (n+1) H(+)(in) = a plastoquinol + NADP(+) + n H(+)(out)</text>
        <dbReference type="Rhea" id="RHEA:42612"/>
        <dbReference type="Rhea" id="RHEA-COMP:9561"/>
        <dbReference type="Rhea" id="RHEA-COMP:9562"/>
        <dbReference type="ChEBI" id="CHEBI:15378"/>
        <dbReference type="ChEBI" id="CHEBI:17757"/>
        <dbReference type="ChEBI" id="CHEBI:57783"/>
        <dbReference type="ChEBI" id="CHEBI:58349"/>
        <dbReference type="ChEBI" id="CHEBI:62192"/>
    </reaction>
</comment>
<comment type="subcellular location">
    <subcellularLocation>
        <location evidence="2">Plastid</location>
        <location evidence="2">Chloroplast thylakoid membrane</location>
        <topology evidence="2">Multi-pass membrane protein</topology>
    </subcellularLocation>
</comment>
<comment type="RNA editing">
    <location>
        <position position="1" evidence="1"/>
    </location>
    <text evidence="1">The initiator methionine is created by RNA editing.</text>
</comment>
<comment type="similarity">
    <text evidence="2">Belongs to the complex I subunit 4 family.</text>
</comment>
<geneLocation type="chloroplast"/>
<dbReference type="EC" id="7.1.1.-" evidence="2"/>
<dbReference type="EMBL" id="EF489041">
    <property type="protein sequence ID" value="ABO36761.1"/>
    <property type="status" value="ALT_SEQ"/>
    <property type="molecule type" value="Genomic_DNA"/>
</dbReference>
<dbReference type="RefSeq" id="YP_001109557.2">
    <property type="nucleotide sequence ID" value="NC_009143.1"/>
</dbReference>
<dbReference type="SMR" id="A4GYW6"/>
<dbReference type="FunCoup" id="A4GYW6">
    <property type="interactions" value="5"/>
</dbReference>
<dbReference type="STRING" id="3694.A4GYW6"/>
<dbReference type="GeneID" id="4929740"/>
<dbReference type="KEGG" id="pop:4929740"/>
<dbReference type="InParanoid" id="A4GYW6"/>
<dbReference type="OrthoDB" id="564260at2759"/>
<dbReference type="Proteomes" id="UP000006729">
    <property type="component" value="Chloroplast"/>
</dbReference>
<dbReference type="GO" id="GO:0009535">
    <property type="term" value="C:chloroplast thylakoid membrane"/>
    <property type="evidence" value="ECO:0007669"/>
    <property type="project" value="UniProtKB-SubCell"/>
</dbReference>
<dbReference type="GO" id="GO:0008137">
    <property type="term" value="F:NADH dehydrogenase (ubiquinone) activity"/>
    <property type="evidence" value="ECO:0007669"/>
    <property type="project" value="InterPro"/>
</dbReference>
<dbReference type="GO" id="GO:0048039">
    <property type="term" value="F:ubiquinone binding"/>
    <property type="evidence" value="ECO:0000318"/>
    <property type="project" value="GO_Central"/>
</dbReference>
<dbReference type="GO" id="GO:0009060">
    <property type="term" value="P:aerobic respiration"/>
    <property type="evidence" value="ECO:0000318"/>
    <property type="project" value="GO_Central"/>
</dbReference>
<dbReference type="GO" id="GO:0042773">
    <property type="term" value="P:ATP synthesis coupled electron transport"/>
    <property type="evidence" value="ECO:0007669"/>
    <property type="project" value="InterPro"/>
</dbReference>
<dbReference type="GO" id="GO:0015990">
    <property type="term" value="P:electron transport coupled proton transport"/>
    <property type="evidence" value="ECO:0000318"/>
    <property type="project" value="GO_Central"/>
</dbReference>
<dbReference type="HAMAP" id="MF_00491">
    <property type="entry name" value="NDH1_NuoM"/>
    <property type="match status" value="1"/>
</dbReference>
<dbReference type="InterPro" id="IPR022997">
    <property type="entry name" value="NADH_Q_OxRdtase_chain4"/>
</dbReference>
<dbReference type="InterPro" id="IPR010227">
    <property type="entry name" value="NADH_Q_OxRdtase_chainM/4"/>
</dbReference>
<dbReference type="InterPro" id="IPR003918">
    <property type="entry name" value="NADH_UbQ_OxRdtase"/>
</dbReference>
<dbReference type="InterPro" id="IPR001750">
    <property type="entry name" value="ND/Mrp_TM"/>
</dbReference>
<dbReference type="NCBIfam" id="TIGR01972">
    <property type="entry name" value="NDH_I_M"/>
    <property type="match status" value="1"/>
</dbReference>
<dbReference type="PANTHER" id="PTHR43507:SF21">
    <property type="entry name" value="NAD(P)H-QUINONE OXIDOREDUCTASE CHAIN 4, CHLOROPLASTIC"/>
    <property type="match status" value="1"/>
</dbReference>
<dbReference type="PANTHER" id="PTHR43507">
    <property type="entry name" value="NADH-UBIQUINONE OXIDOREDUCTASE CHAIN 4"/>
    <property type="match status" value="1"/>
</dbReference>
<dbReference type="Pfam" id="PF00361">
    <property type="entry name" value="Proton_antipo_M"/>
    <property type="match status" value="1"/>
</dbReference>
<dbReference type="PRINTS" id="PR01437">
    <property type="entry name" value="NUOXDRDTASE4"/>
</dbReference>
<sequence length="500" mass="56247">MNSFPWLTIFVGLPISAGFLIFVFPHRGNKVIRWYTIFICVLELLLMTYAFSYYFQLDDPLIQLTESYKWINFFDFYWRLGIDGLSLGPILLTGFITTLATLAARPITRDSRLFHFLMLAMYSGQIGLFSSQNLLLFFIMWELELIPVYLLLAMWGGKQRLYSATKFILYTAGSSVFLLMGALGIAFYASNEPTFNFETSANQSYPVTLEILFYIGFLIAFAVKSPIIPLHTWLPDTHGEAHYSTCMLLAGILLKMGAYGLVRINMELLSHAHSIFSSWLIIVGAIQIIYAASTSSGQKNLKKRIAYSSVSHMGFTIIGICSISDMGLNGAILQIISHGFIGAALFFLSGTSYDRIRLVYLDEMGGMATLMPKIFMMFSILSLASLALPGMSGFFAELVVFFGIITAKKYFLMPKILITFVTAVGTILTPIYLLSMLRQMFYGYKLFNARNSYFFDSGPRELFVSIAILLPVISIGIYPDFVFSLSVDKVEAILSNYFYS</sequence>
<gene>
    <name evidence="2" type="primary">ndhD</name>
    <name type="ordered locus">Poptr_cp079</name>
</gene>